<reference key="1">
    <citation type="journal article" date="1992" name="Mol. Microbiol.">
        <title>Cloning, sequencing and distribution of the Salmonella typhimurium LT2 sialidase gene, nanH, provides evidence for interspecies gene transfer.</title>
        <authorList>
            <person name="Hoyer L.L."/>
            <person name="Hamilton A.C."/>
            <person name="Steenbergen S.M."/>
            <person name="Vimr E.R."/>
        </authorList>
    </citation>
    <scope>NUCLEOTIDE SEQUENCE [GENOMIC DNA]</scope>
    <scope>PROTEIN SEQUENCE OF 2-40</scope>
    <source>
        <strain>LT2</strain>
    </source>
</reference>
<reference key="2">
    <citation type="journal article" date="2001" name="Nature">
        <title>Complete genome sequence of Salmonella enterica serovar Typhimurium LT2.</title>
        <authorList>
            <person name="McClelland M."/>
            <person name="Sanderson K.E."/>
            <person name="Spieth J."/>
            <person name="Clifton S.W."/>
            <person name="Latreille P."/>
            <person name="Courtney L."/>
            <person name="Porwollik S."/>
            <person name="Ali J."/>
            <person name="Dante M."/>
            <person name="Du F."/>
            <person name="Hou S."/>
            <person name="Layman D."/>
            <person name="Leonard S."/>
            <person name="Nguyen C."/>
            <person name="Scott K."/>
            <person name="Holmes A."/>
            <person name="Grewal N."/>
            <person name="Mulvaney E."/>
            <person name="Ryan E."/>
            <person name="Sun H."/>
            <person name="Florea L."/>
            <person name="Miller W."/>
            <person name="Stoneking T."/>
            <person name="Nhan M."/>
            <person name="Waterston R."/>
            <person name="Wilson R.K."/>
        </authorList>
    </citation>
    <scope>NUCLEOTIDE SEQUENCE [LARGE SCALE GENOMIC DNA]</scope>
    <source>
        <strain>LT2 / SGSC1412 / ATCC 700720</strain>
    </source>
</reference>
<reference key="3">
    <citation type="journal article" date="1992" name="J. Mol. Biol.">
        <title>Purification, crystallization and preliminary crystallographic study of neuraminidase from Vibrio cholerae and Salmonella typhimurium LT2.</title>
        <authorList>
            <person name="Taylor G.L."/>
            <person name="Vimr E.R."/>
            <person name="Garman E.F."/>
            <person name="Laver W.G."/>
        </authorList>
    </citation>
    <scope>CHARACTERIZATION</scope>
    <scope>X-RAY CRYSTALLOGRAPHY (1.8 ANGSTROMS)</scope>
    <source>
        <strain>LT2</strain>
    </source>
</reference>
<reference key="4">
    <citation type="journal article" date="1993" name="Proc. Natl. Acad. Sci. U.S.A.">
        <title>Crystal structure of a bacterial sialidase (from Salmonella typhimurium LT2) shows the same fold as an influenza virus neuraminidase.</title>
        <authorList>
            <person name="Crennell S.J."/>
            <person name="Garman E.F."/>
            <person name="Laver W.G."/>
            <person name="Vimr E.R."/>
            <person name="Taylor G.L."/>
        </authorList>
    </citation>
    <scope>X-RAY CRYSTALLOGRAPHY (2.0 ANGSTROMS)</scope>
    <scope>SEQUENCE REVISION TO C-TERMINUS</scope>
    <source>
        <strain>LT2</strain>
    </source>
</reference>
<reference key="5">
    <citation type="journal article" date="1996" name="J. Mol. Biol.">
        <title>The structures of Salmonella typhimurium LT2 neuraminidase and its complexes with three inhibitors at high resolution.</title>
        <authorList>
            <person name="Crennell S.J."/>
            <person name="Garman E.F."/>
            <person name="Philippon C."/>
            <person name="Vasella A."/>
            <person name="Laver W.G."/>
            <person name="Vimr E.R."/>
            <person name="Taylor G.L."/>
        </authorList>
    </citation>
    <scope>X-RAY CRYSTALLOGRAPHY (1.6 ANGSTROMS)</scope>
    <source>
        <strain>LT2</strain>
    </source>
</reference>
<reference key="6">
    <citation type="submission" date="1998-07" db="PDB data bank">
        <authorList>
            <person name="Garman E.F."/>
            <person name="Wouters J."/>
            <person name="Schneider T.R."/>
            <person name="Vimr E.R."/>
            <person name="Laver W.G."/>
            <person name="Sheldrick G.M."/>
        </authorList>
    </citation>
    <scope>X-RAY CRYSTALLOGRAPHY (1.05 ANGSTROMS)</scope>
</reference>
<proteinExistence type="evidence at protein level"/>
<sequence length="382" mass="42073">MTVEKSVVFKAEGEHFTDQKGNTIVGSGSGGTTKYFRIPAMCTTSKGTIVVFADARHNTASDQSFIDTAAARSTDGGKTWNKKIAIYNDRVNSKLSRVMDPTCIVANIQGRETILVMVGKWNNNDKTWGAYRDKAPDTDWDLVLYKSTDDGVTFSKVETNIHDIVTKNGTISAMLGGVGSGLQLNDGKLVFPVQMVRTKNITTVLNTSFIYSTDGITWSLPSGYCEGFGSENNIIEFNASLVNNIRNSGLRRSFETKDFGKTWTEFPPMDKKVDNRNHGVQGSTITIPSGNKLVAAHSSAQNKNNDYTRSDISLYAHNLYSGEVKLIDDFYPKVGNASGAGYSCLSYRKNVDKETLYVVYEANGSIEFQDLSRHLPVIKSYN</sequence>
<organism>
    <name type="scientific">Salmonella typhimurium (strain LT2 / SGSC1412 / ATCC 700720)</name>
    <dbReference type="NCBI Taxonomy" id="99287"/>
    <lineage>
        <taxon>Bacteria</taxon>
        <taxon>Pseudomonadati</taxon>
        <taxon>Pseudomonadota</taxon>
        <taxon>Gammaproteobacteria</taxon>
        <taxon>Enterobacterales</taxon>
        <taxon>Enterobacteriaceae</taxon>
        <taxon>Salmonella</taxon>
    </lineage>
</organism>
<name>NANH_SALTY</name>
<dbReference type="EC" id="3.2.1.18"/>
<dbReference type="EMBL" id="M55342">
    <property type="protein sequence ID" value="AAA27168.1"/>
    <property type="molecule type" value="Genomic_DNA"/>
</dbReference>
<dbReference type="EMBL" id="AE006468">
    <property type="protein sequence ID" value="AAL19864.1"/>
    <property type="status" value="ALT_INIT"/>
    <property type="molecule type" value="Genomic_DNA"/>
</dbReference>
<dbReference type="PDB" id="1DIL">
    <property type="method" value="X-ray"/>
    <property type="resolution" value="1.90 A"/>
    <property type="chains" value="A=2-382"/>
</dbReference>
<dbReference type="PDB" id="1DIM">
    <property type="method" value="X-ray"/>
    <property type="resolution" value="1.60 A"/>
    <property type="chains" value="A=2-382"/>
</dbReference>
<dbReference type="PDB" id="2SIL">
    <property type="method" value="X-ray"/>
    <property type="resolution" value="1.60 A"/>
    <property type="chains" value="A=2-382"/>
</dbReference>
<dbReference type="PDB" id="2SIM">
    <property type="method" value="X-ray"/>
    <property type="resolution" value="1.60 A"/>
    <property type="chains" value="A=2-382"/>
</dbReference>
<dbReference type="PDB" id="3SIL">
    <property type="method" value="X-ray"/>
    <property type="resolution" value="1.05 A"/>
    <property type="chains" value="A=4-382"/>
</dbReference>
<dbReference type="PDB" id="6TRG">
    <property type="method" value="X-ray"/>
    <property type="resolution" value="1.00 A"/>
    <property type="chains" value="XXX=4-382"/>
</dbReference>
<dbReference type="PDB" id="6TVI">
    <property type="method" value="X-ray"/>
    <property type="resolution" value="1.00 A"/>
    <property type="chains" value="AAA=4-382"/>
</dbReference>
<dbReference type="PDB" id="7AEY">
    <property type="method" value="X-ray"/>
    <property type="resolution" value="0.92 A"/>
    <property type="chains" value="AAA=4-382"/>
</dbReference>
<dbReference type="PDB" id="7AF2">
    <property type="method" value="X-ray"/>
    <property type="resolution" value="0.79 A"/>
    <property type="chains" value="AAA=4-382"/>
</dbReference>
<dbReference type="PDBsum" id="1DIL"/>
<dbReference type="PDBsum" id="1DIM"/>
<dbReference type="PDBsum" id="2SIL"/>
<dbReference type="PDBsum" id="2SIM"/>
<dbReference type="PDBsum" id="3SIL"/>
<dbReference type="PDBsum" id="6TRG"/>
<dbReference type="PDBsum" id="6TVI"/>
<dbReference type="PDBsum" id="7AEY"/>
<dbReference type="PDBsum" id="7AF2"/>
<dbReference type="SMR" id="P29768"/>
<dbReference type="STRING" id="99287.STM0928"/>
<dbReference type="DrugBank" id="DB04561">
    <property type="generic name" value="4-acetamido-2,4-didexoy-D-glycero-beta-D-galacto-octopyranosylphosphonic acid"/>
</dbReference>
<dbReference type="CAZy" id="GH33">
    <property type="family name" value="Glycoside Hydrolase Family 33"/>
</dbReference>
<dbReference type="PaxDb" id="99287-STM0928"/>
<dbReference type="PATRIC" id="fig|99287.12.peg.978"/>
<dbReference type="HOGENOM" id="CLU_667119_0_0_6"/>
<dbReference type="BRENDA" id="3.2.1.18">
    <property type="organism ID" value="5542"/>
</dbReference>
<dbReference type="EvolutionaryTrace" id="P29768"/>
<dbReference type="Proteomes" id="UP000001014">
    <property type="component" value="Chromosome"/>
</dbReference>
<dbReference type="GO" id="GO:0005737">
    <property type="term" value="C:cytoplasm"/>
    <property type="evidence" value="ECO:0000318"/>
    <property type="project" value="GO_Central"/>
</dbReference>
<dbReference type="GO" id="GO:0043231">
    <property type="term" value="C:intracellular membrane-bounded organelle"/>
    <property type="evidence" value="ECO:0000318"/>
    <property type="project" value="GO_Central"/>
</dbReference>
<dbReference type="GO" id="GO:0016020">
    <property type="term" value="C:membrane"/>
    <property type="evidence" value="ECO:0000318"/>
    <property type="project" value="GO_Central"/>
</dbReference>
<dbReference type="GO" id="GO:0004308">
    <property type="term" value="F:exo-alpha-sialidase activity"/>
    <property type="evidence" value="ECO:0000318"/>
    <property type="project" value="GO_Central"/>
</dbReference>
<dbReference type="GO" id="GO:0006689">
    <property type="term" value="P:ganglioside catabolic process"/>
    <property type="evidence" value="ECO:0000318"/>
    <property type="project" value="GO_Central"/>
</dbReference>
<dbReference type="GO" id="GO:0009313">
    <property type="term" value="P:oligosaccharide catabolic process"/>
    <property type="evidence" value="ECO:0000318"/>
    <property type="project" value="GO_Central"/>
</dbReference>
<dbReference type="CDD" id="cd15482">
    <property type="entry name" value="Sialidase_non-viral"/>
    <property type="match status" value="1"/>
</dbReference>
<dbReference type="FunFam" id="2.120.10.10:FF:000022">
    <property type="entry name" value="Sialidase"/>
    <property type="match status" value="1"/>
</dbReference>
<dbReference type="Gene3D" id="2.120.10.10">
    <property type="match status" value="1"/>
</dbReference>
<dbReference type="InterPro" id="IPR011040">
    <property type="entry name" value="Sialidase"/>
</dbReference>
<dbReference type="InterPro" id="IPR026856">
    <property type="entry name" value="Sialidase_fam"/>
</dbReference>
<dbReference type="InterPro" id="IPR036278">
    <property type="entry name" value="Sialidase_sf"/>
</dbReference>
<dbReference type="InterPro" id="IPR008377">
    <property type="entry name" value="Sialidase_trypan"/>
</dbReference>
<dbReference type="PANTHER" id="PTHR10628:SF30">
    <property type="entry name" value="EXO-ALPHA-SIALIDASE"/>
    <property type="match status" value="1"/>
</dbReference>
<dbReference type="PANTHER" id="PTHR10628">
    <property type="entry name" value="SIALIDASE"/>
    <property type="match status" value="1"/>
</dbReference>
<dbReference type="Pfam" id="PF13859">
    <property type="entry name" value="BNR_3"/>
    <property type="match status" value="1"/>
</dbReference>
<dbReference type="PRINTS" id="PR01803">
    <property type="entry name" value="TCSIALIDASE"/>
</dbReference>
<dbReference type="SUPFAM" id="SSF50939">
    <property type="entry name" value="Sialidases"/>
    <property type="match status" value="1"/>
</dbReference>
<gene>
    <name type="primary">nanH</name>
    <name type="ordered locus">STM0928</name>
</gene>
<evidence type="ECO:0000250" key="1"/>
<evidence type="ECO:0000269" key="2">
    <source>
    </source>
</evidence>
<evidence type="ECO:0000305" key="3"/>
<evidence type="ECO:0007829" key="4">
    <source>
        <dbReference type="PDB" id="3SIL"/>
    </source>
</evidence>
<comment type="function">
    <text>Cleaves the terminal sialic acid (N-acetyl neuraminic acid) from carbohydrate chains in glycoproteins providing free sialic acid which can be used as carbon and energy sources. Sialidases have been suggested to be pathogenic factors in microbial infections.</text>
</comment>
<comment type="catalytic activity">
    <reaction>
        <text>Hydrolysis of alpha-(2-&gt;3)-, alpha-(2-&gt;6)-, alpha-(2-&gt;8)- glycosidic linkages of terminal sialic acid residues in oligosaccharides, glycoproteins, glycolipids, colominic acid and synthetic substrates.</text>
        <dbReference type="EC" id="3.2.1.18"/>
    </reaction>
</comment>
<comment type="subunit">
    <text>Monomer.</text>
</comment>
<comment type="similarity">
    <text evidence="3">Belongs to the glycosyl hydrolase 33 family.</text>
</comment>
<comment type="sequence caution" evidence="3">
    <conflict type="erroneous initiation">
        <sequence resource="EMBL-CDS" id="AAL19864"/>
    </conflict>
</comment>
<accession>P29768</accession>
<feature type="initiator methionine" description="Removed" evidence="2">
    <location>
        <position position="1"/>
    </location>
</feature>
<feature type="chain" id="PRO_0000208909" description="Sialidase">
    <location>
        <begin position="2"/>
        <end position="382"/>
    </location>
</feature>
<feature type="repeat" description="BNR 1">
    <location>
        <begin position="71"/>
        <end position="82"/>
    </location>
</feature>
<feature type="repeat" description="BNR 2">
    <location>
        <begin position="145"/>
        <end position="156"/>
    </location>
</feature>
<feature type="repeat" description="BNR 3">
    <location>
        <begin position="210"/>
        <end position="220"/>
    </location>
</feature>
<feature type="repeat" description="BNR 4">
    <location>
        <begin position="254"/>
        <end position="265"/>
    </location>
</feature>
<feature type="active site" description="Proton acceptor" evidence="1">
    <location>
        <position position="62"/>
    </location>
</feature>
<feature type="active site" description="Nucleophile" evidence="1">
    <location>
        <position position="342"/>
    </location>
</feature>
<feature type="active site">
    <location>
        <position position="361"/>
    </location>
</feature>
<feature type="binding site">
    <location>
        <position position="37"/>
    </location>
    <ligand>
        <name>substrate</name>
    </ligand>
</feature>
<feature type="binding site">
    <location>
        <position position="246"/>
    </location>
    <ligand>
        <name>substrate</name>
    </ligand>
</feature>
<feature type="binding site">
    <location>
        <position position="309"/>
    </location>
    <ligand>
        <name>substrate</name>
    </ligand>
</feature>
<feature type="disulfide bond">
    <location>
        <begin position="42"/>
        <end position="103"/>
    </location>
</feature>
<feature type="sequence conflict" description="In Ref. 1; AAA27168." evidence="3" ref="1">
    <original>D</original>
    <variation>A</variation>
    <location>
        <position position="329"/>
    </location>
</feature>
<feature type="strand" evidence="4">
    <location>
        <begin position="5"/>
        <end position="9"/>
    </location>
</feature>
<feature type="helix" evidence="4">
    <location>
        <begin position="29"/>
        <end position="31"/>
    </location>
</feature>
<feature type="strand" evidence="4">
    <location>
        <begin position="35"/>
        <end position="43"/>
    </location>
</feature>
<feature type="strand" evidence="4">
    <location>
        <begin position="49"/>
        <end position="58"/>
    </location>
</feature>
<feature type="strand" evidence="4">
    <location>
        <begin position="62"/>
        <end position="64"/>
    </location>
</feature>
<feature type="strand" evidence="4">
    <location>
        <begin position="66"/>
        <end position="78"/>
    </location>
</feature>
<feature type="strand" evidence="4">
    <location>
        <begin position="81"/>
        <end position="86"/>
    </location>
</feature>
<feature type="turn" evidence="4">
    <location>
        <begin position="93"/>
        <end position="95"/>
    </location>
</feature>
<feature type="strand" evidence="4">
    <location>
        <begin position="97"/>
        <end position="108"/>
    </location>
</feature>
<feature type="strand" evidence="4">
    <location>
        <begin position="111"/>
        <end position="123"/>
    </location>
</feature>
<feature type="helix" evidence="4">
    <location>
        <begin position="128"/>
        <end position="130"/>
    </location>
</feature>
<feature type="strand" evidence="4">
    <location>
        <begin position="133"/>
        <end position="136"/>
    </location>
</feature>
<feature type="strand" evidence="4">
    <location>
        <begin position="141"/>
        <end position="149"/>
    </location>
</feature>
<feature type="strand" evidence="4">
    <location>
        <begin position="155"/>
        <end position="157"/>
    </location>
</feature>
<feature type="helix" evidence="4">
    <location>
        <begin position="161"/>
        <end position="168"/>
    </location>
</feature>
<feature type="strand" evidence="4">
    <location>
        <begin position="170"/>
        <end position="176"/>
    </location>
</feature>
<feature type="strand" evidence="4">
    <location>
        <begin position="178"/>
        <end position="180"/>
    </location>
</feature>
<feature type="strand" evidence="4">
    <location>
        <begin position="189"/>
        <end position="197"/>
    </location>
</feature>
<feature type="strand" evidence="4">
    <location>
        <begin position="204"/>
        <end position="219"/>
    </location>
</feature>
<feature type="strand" evidence="4">
    <location>
        <begin position="232"/>
        <end position="237"/>
    </location>
</feature>
<feature type="strand" evidence="4">
    <location>
        <begin position="240"/>
        <end position="245"/>
    </location>
</feature>
<feature type="strand" evidence="4">
    <location>
        <begin position="248"/>
        <end position="250"/>
    </location>
</feature>
<feature type="strand" evidence="4">
    <location>
        <begin position="254"/>
        <end position="261"/>
    </location>
</feature>
<feature type="turn" evidence="4">
    <location>
        <begin position="267"/>
        <end position="271"/>
    </location>
</feature>
<feature type="strand" evidence="4">
    <location>
        <begin position="283"/>
        <end position="289"/>
    </location>
</feature>
<feature type="strand" evidence="4">
    <location>
        <begin position="292"/>
        <end position="300"/>
    </location>
</feature>
<feature type="strand" evidence="4">
    <location>
        <begin position="312"/>
        <end position="317"/>
    </location>
</feature>
<feature type="turn" evidence="4">
    <location>
        <begin position="319"/>
        <end position="321"/>
    </location>
</feature>
<feature type="strand" evidence="4">
    <location>
        <begin position="324"/>
        <end position="331"/>
    </location>
</feature>
<feature type="strand" evidence="4">
    <location>
        <begin position="343"/>
        <end position="350"/>
    </location>
</feature>
<feature type="strand" evidence="4">
    <location>
        <begin position="353"/>
        <end position="362"/>
    </location>
</feature>
<feature type="strand" evidence="4">
    <location>
        <begin position="365"/>
        <end position="370"/>
    </location>
</feature>
<feature type="helix" evidence="4">
    <location>
        <begin position="372"/>
        <end position="374"/>
    </location>
</feature>
<feature type="helix" evidence="4">
    <location>
        <begin position="375"/>
        <end position="379"/>
    </location>
</feature>
<keyword id="KW-0002">3D-structure</keyword>
<keyword id="KW-0903">Direct protein sequencing</keyword>
<keyword id="KW-1015">Disulfide bond</keyword>
<keyword id="KW-0326">Glycosidase</keyword>
<keyword id="KW-0378">Hydrolase</keyword>
<keyword id="KW-1185">Reference proteome</keyword>
<keyword id="KW-0677">Repeat</keyword>
<protein>
    <recommendedName>
        <fullName>Sialidase</fullName>
        <ecNumber>3.2.1.18</ecNumber>
    </recommendedName>
    <alternativeName>
        <fullName>N-acylneuraminate glycohydrolase</fullName>
    </alternativeName>
    <alternativeName>
        <fullName>Neuraminidase</fullName>
        <shortName>NANase</shortName>
    </alternativeName>
    <alternativeName>
        <fullName>STNA</fullName>
    </alternativeName>
</protein>